<sequence>MATKKGTRKRRAKKNVETGVAHIHSTFNNTLIMITDVQGNAVAWSSAGVLGFKGSRKSTPFAAQMASEAAAKQAMEHGMKTVEVEVKGPGSGREAAIRALQATGLEVTAIRDVTPVPHNGSRPPKRRRV</sequence>
<comment type="function">
    <text evidence="1">Located on the platform of the 30S subunit, it bridges several disparate RNA helices of the 16S rRNA. Forms part of the Shine-Dalgarno cleft in the 70S ribosome.</text>
</comment>
<comment type="subunit">
    <text evidence="1">Part of the 30S ribosomal subunit. Interacts with proteins S7 and S18. Binds to IF-3.</text>
</comment>
<comment type="similarity">
    <text evidence="1">Belongs to the universal ribosomal protein uS11 family.</text>
</comment>
<protein>
    <recommendedName>
        <fullName evidence="1">Small ribosomal subunit protein uS11</fullName>
    </recommendedName>
    <alternativeName>
        <fullName evidence="2">30S ribosomal protein S11</fullName>
    </alternativeName>
</protein>
<keyword id="KW-1185">Reference proteome</keyword>
<keyword id="KW-0687">Ribonucleoprotein</keyword>
<keyword id="KW-0689">Ribosomal protein</keyword>
<keyword id="KW-0694">RNA-binding</keyword>
<keyword id="KW-0699">rRNA-binding</keyword>
<dbReference type="EMBL" id="CP000705">
    <property type="protein sequence ID" value="ABQ83704.1"/>
    <property type="molecule type" value="Genomic_DNA"/>
</dbReference>
<dbReference type="RefSeq" id="WP_003664532.1">
    <property type="nucleotide sequence ID" value="NZ_AZDD01000010.1"/>
</dbReference>
<dbReference type="SMR" id="A5VLI0"/>
<dbReference type="STRING" id="557436.Lreu_1458"/>
<dbReference type="GeneID" id="78174232"/>
<dbReference type="KEGG" id="lre:Lreu_1458"/>
<dbReference type="PATRIC" id="fig|557436.17.peg.165"/>
<dbReference type="eggNOG" id="COG0100">
    <property type="taxonomic scope" value="Bacteria"/>
</dbReference>
<dbReference type="HOGENOM" id="CLU_072439_5_0_9"/>
<dbReference type="Proteomes" id="UP000001991">
    <property type="component" value="Chromosome"/>
</dbReference>
<dbReference type="GO" id="GO:1990904">
    <property type="term" value="C:ribonucleoprotein complex"/>
    <property type="evidence" value="ECO:0007669"/>
    <property type="project" value="UniProtKB-KW"/>
</dbReference>
<dbReference type="GO" id="GO:0005840">
    <property type="term" value="C:ribosome"/>
    <property type="evidence" value="ECO:0007669"/>
    <property type="project" value="UniProtKB-KW"/>
</dbReference>
<dbReference type="GO" id="GO:0019843">
    <property type="term" value="F:rRNA binding"/>
    <property type="evidence" value="ECO:0007669"/>
    <property type="project" value="UniProtKB-UniRule"/>
</dbReference>
<dbReference type="GO" id="GO:0003735">
    <property type="term" value="F:structural constituent of ribosome"/>
    <property type="evidence" value="ECO:0007669"/>
    <property type="project" value="InterPro"/>
</dbReference>
<dbReference type="GO" id="GO:0006412">
    <property type="term" value="P:translation"/>
    <property type="evidence" value="ECO:0007669"/>
    <property type="project" value="UniProtKB-UniRule"/>
</dbReference>
<dbReference type="FunFam" id="3.30.420.80:FF:000001">
    <property type="entry name" value="30S ribosomal protein S11"/>
    <property type="match status" value="1"/>
</dbReference>
<dbReference type="Gene3D" id="3.30.420.80">
    <property type="entry name" value="Ribosomal protein S11"/>
    <property type="match status" value="1"/>
</dbReference>
<dbReference type="HAMAP" id="MF_01310">
    <property type="entry name" value="Ribosomal_uS11"/>
    <property type="match status" value="1"/>
</dbReference>
<dbReference type="InterPro" id="IPR001971">
    <property type="entry name" value="Ribosomal_uS11"/>
</dbReference>
<dbReference type="InterPro" id="IPR019981">
    <property type="entry name" value="Ribosomal_uS11_bac-type"/>
</dbReference>
<dbReference type="InterPro" id="IPR018102">
    <property type="entry name" value="Ribosomal_uS11_CS"/>
</dbReference>
<dbReference type="InterPro" id="IPR036967">
    <property type="entry name" value="Ribosomal_uS11_sf"/>
</dbReference>
<dbReference type="NCBIfam" id="NF003698">
    <property type="entry name" value="PRK05309.1"/>
    <property type="match status" value="1"/>
</dbReference>
<dbReference type="NCBIfam" id="TIGR03632">
    <property type="entry name" value="uS11_bact"/>
    <property type="match status" value="1"/>
</dbReference>
<dbReference type="PANTHER" id="PTHR11759">
    <property type="entry name" value="40S RIBOSOMAL PROTEIN S14/30S RIBOSOMAL PROTEIN S11"/>
    <property type="match status" value="1"/>
</dbReference>
<dbReference type="Pfam" id="PF00411">
    <property type="entry name" value="Ribosomal_S11"/>
    <property type="match status" value="1"/>
</dbReference>
<dbReference type="PIRSF" id="PIRSF002131">
    <property type="entry name" value="Ribosomal_S11"/>
    <property type="match status" value="1"/>
</dbReference>
<dbReference type="SUPFAM" id="SSF53137">
    <property type="entry name" value="Translational machinery components"/>
    <property type="match status" value="1"/>
</dbReference>
<dbReference type="PROSITE" id="PS00054">
    <property type="entry name" value="RIBOSOMAL_S11"/>
    <property type="match status" value="1"/>
</dbReference>
<proteinExistence type="inferred from homology"/>
<name>RS11_LIMRD</name>
<feature type="chain" id="PRO_1000067503" description="Small ribosomal subunit protein uS11">
    <location>
        <begin position="1"/>
        <end position="129"/>
    </location>
</feature>
<accession>A5VLI0</accession>
<gene>
    <name evidence="1" type="primary">rpsK</name>
    <name type="ordered locus">Lreu_1458</name>
</gene>
<organism>
    <name type="scientific">Limosilactobacillus reuteri (strain DSM 20016)</name>
    <name type="common">Lactobacillus reuteri</name>
    <dbReference type="NCBI Taxonomy" id="557436"/>
    <lineage>
        <taxon>Bacteria</taxon>
        <taxon>Bacillati</taxon>
        <taxon>Bacillota</taxon>
        <taxon>Bacilli</taxon>
        <taxon>Lactobacillales</taxon>
        <taxon>Lactobacillaceae</taxon>
        <taxon>Limosilactobacillus</taxon>
    </lineage>
</organism>
<evidence type="ECO:0000255" key="1">
    <source>
        <dbReference type="HAMAP-Rule" id="MF_01310"/>
    </source>
</evidence>
<evidence type="ECO:0000305" key="2"/>
<reference key="1">
    <citation type="journal article" date="2011" name="PLoS Genet.">
        <title>The evolution of host specialization in the vertebrate gut symbiont Lactobacillus reuteri.</title>
        <authorList>
            <person name="Frese S.A."/>
            <person name="Benson A.K."/>
            <person name="Tannock G.W."/>
            <person name="Loach D.M."/>
            <person name="Kim J."/>
            <person name="Zhang M."/>
            <person name="Oh P.L."/>
            <person name="Heng N.C."/>
            <person name="Patil P.B."/>
            <person name="Juge N."/>
            <person name="Mackenzie D.A."/>
            <person name="Pearson B.M."/>
            <person name="Lapidus A."/>
            <person name="Dalin E."/>
            <person name="Tice H."/>
            <person name="Goltsman E."/>
            <person name="Land M."/>
            <person name="Hauser L."/>
            <person name="Ivanova N."/>
            <person name="Kyrpides N.C."/>
            <person name="Walter J."/>
        </authorList>
    </citation>
    <scope>NUCLEOTIDE SEQUENCE [LARGE SCALE GENOMIC DNA]</scope>
    <source>
        <strain>DSM 20016</strain>
    </source>
</reference>